<protein>
    <recommendedName>
        <fullName evidence="1">Flagellar assembly factor FliW</fullName>
    </recommendedName>
</protein>
<comment type="function">
    <text evidence="1">Acts as an anti-CsrA protein, binds CsrA and prevents it from repressing translation of its target genes, one of which is flagellin. Binds to flagellin and participates in the assembly of the flagellum.</text>
</comment>
<comment type="subunit">
    <text evidence="1">Interacts with translational regulator CsrA and flagellin(s).</text>
</comment>
<comment type="subcellular location">
    <subcellularLocation>
        <location evidence="1">Cytoplasm</location>
    </subcellularLocation>
</comment>
<comment type="similarity">
    <text evidence="1">Belongs to the FliW family.</text>
</comment>
<organism>
    <name type="scientific">Geobacter sulfurreducens (strain ATCC 51573 / DSM 12127 / PCA)</name>
    <dbReference type="NCBI Taxonomy" id="243231"/>
    <lineage>
        <taxon>Bacteria</taxon>
        <taxon>Pseudomonadati</taxon>
        <taxon>Thermodesulfobacteriota</taxon>
        <taxon>Desulfuromonadia</taxon>
        <taxon>Geobacterales</taxon>
        <taxon>Geobacteraceae</taxon>
        <taxon>Geobacter</taxon>
    </lineage>
</organism>
<gene>
    <name evidence="1" type="primary">fliW</name>
    <name type="ordered locus">GSU3040</name>
</gene>
<feature type="chain" id="PRO_0000272990" description="Flagellar assembly factor FliW">
    <location>
        <begin position="1"/>
        <end position="159"/>
    </location>
</feature>
<name>FLIW_GEOSL</name>
<evidence type="ECO:0000255" key="1">
    <source>
        <dbReference type="HAMAP-Rule" id="MF_01185"/>
    </source>
</evidence>
<sequence>MNVTTTRFGEIAVEEAKIITLPDGMLGFSEKRFVLLTPQNITPFCWLQSVENPELAFVVVDTKECASDYAVKLTAEESEKLCVNDGDEVVLLAVVTMASDPFNITVNLQGPIALNPKRMLAKQIVLEGSRYTTKHPFFDQAARSKAPGKRNASGEVTAA</sequence>
<proteinExistence type="inferred from homology"/>
<keyword id="KW-1005">Bacterial flagellum biogenesis</keyword>
<keyword id="KW-0143">Chaperone</keyword>
<keyword id="KW-0963">Cytoplasm</keyword>
<keyword id="KW-1185">Reference proteome</keyword>
<keyword id="KW-0810">Translation regulation</keyword>
<accession>Q748G2</accession>
<reference key="1">
    <citation type="journal article" date="2003" name="Science">
        <title>Genome of Geobacter sulfurreducens: metal reduction in subsurface environments.</title>
        <authorList>
            <person name="Methe B.A."/>
            <person name="Nelson K.E."/>
            <person name="Eisen J.A."/>
            <person name="Paulsen I.T."/>
            <person name="Nelson W.C."/>
            <person name="Heidelberg J.F."/>
            <person name="Wu D."/>
            <person name="Wu M."/>
            <person name="Ward N.L."/>
            <person name="Beanan M.J."/>
            <person name="Dodson R.J."/>
            <person name="Madupu R."/>
            <person name="Brinkac L.M."/>
            <person name="Daugherty S.C."/>
            <person name="DeBoy R.T."/>
            <person name="Durkin A.S."/>
            <person name="Gwinn M.L."/>
            <person name="Kolonay J.F."/>
            <person name="Sullivan S.A."/>
            <person name="Haft D.H."/>
            <person name="Selengut J."/>
            <person name="Davidsen T.M."/>
            <person name="Zafar N."/>
            <person name="White O."/>
            <person name="Tran B."/>
            <person name="Romero C."/>
            <person name="Forberger H.A."/>
            <person name="Weidman J.F."/>
            <person name="Khouri H.M."/>
            <person name="Feldblyum T.V."/>
            <person name="Utterback T.R."/>
            <person name="Van Aken S.E."/>
            <person name="Lovley D.R."/>
            <person name="Fraser C.M."/>
        </authorList>
    </citation>
    <scope>NUCLEOTIDE SEQUENCE [LARGE SCALE GENOMIC DNA]</scope>
    <source>
        <strain>ATCC 51573 / DSM 12127 / PCA</strain>
    </source>
</reference>
<dbReference type="EMBL" id="AE017180">
    <property type="protein sequence ID" value="AAR36432.1"/>
    <property type="molecule type" value="Genomic_DNA"/>
</dbReference>
<dbReference type="RefSeq" id="NP_954082.1">
    <property type="nucleotide sequence ID" value="NC_002939.5"/>
</dbReference>
<dbReference type="RefSeq" id="WP_010943666.1">
    <property type="nucleotide sequence ID" value="NC_002939.5"/>
</dbReference>
<dbReference type="SMR" id="Q748G2"/>
<dbReference type="STRING" id="243231.GSU3040"/>
<dbReference type="DNASU" id="2686781"/>
<dbReference type="EnsemblBacteria" id="AAR36432">
    <property type="protein sequence ID" value="AAR36432"/>
    <property type="gene ID" value="GSU3040"/>
</dbReference>
<dbReference type="KEGG" id="gsu:GSU3040"/>
<dbReference type="PATRIC" id="fig|243231.5.peg.3064"/>
<dbReference type="eggNOG" id="COG1699">
    <property type="taxonomic scope" value="Bacteria"/>
</dbReference>
<dbReference type="HOGENOM" id="CLU_112356_0_2_7"/>
<dbReference type="InParanoid" id="Q748G2"/>
<dbReference type="OrthoDB" id="9801235at2"/>
<dbReference type="Proteomes" id="UP000000577">
    <property type="component" value="Chromosome"/>
</dbReference>
<dbReference type="GO" id="GO:0005737">
    <property type="term" value="C:cytoplasm"/>
    <property type="evidence" value="ECO:0007669"/>
    <property type="project" value="UniProtKB-SubCell"/>
</dbReference>
<dbReference type="GO" id="GO:0044780">
    <property type="term" value="P:bacterial-type flagellum assembly"/>
    <property type="evidence" value="ECO:0007669"/>
    <property type="project" value="UniProtKB-UniRule"/>
</dbReference>
<dbReference type="GO" id="GO:0006417">
    <property type="term" value="P:regulation of translation"/>
    <property type="evidence" value="ECO:0007669"/>
    <property type="project" value="UniProtKB-KW"/>
</dbReference>
<dbReference type="Gene3D" id="2.30.290.10">
    <property type="entry name" value="BH3618-like"/>
    <property type="match status" value="1"/>
</dbReference>
<dbReference type="HAMAP" id="MF_01185">
    <property type="entry name" value="FliW"/>
    <property type="match status" value="1"/>
</dbReference>
<dbReference type="InterPro" id="IPR003775">
    <property type="entry name" value="Flagellar_assembly_factor_FliW"/>
</dbReference>
<dbReference type="InterPro" id="IPR024046">
    <property type="entry name" value="Flagellar_assmbl_FliW_dom_sf"/>
</dbReference>
<dbReference type="NCBIfam" id="NF009801">
    <property type="entry name" value="PRK13285.2-4"/>
    <property type="match status" value="1"/>
</dbReference>
<dbReference type="PANTHER" id="PTHR39190">
    <property type="entry name" value="FLAGELLAR ASSEMBLY FACTOR FLIW"/>
    <property type="match status" value="1"/>
</dbReference>
<dbReference type="PANTHER" id="PTHR39190:SF1">
    <property type="entry name" value="FLAGELLAR ASSEMBLY FACTOR FLIW"/>
    <property type="match status" value="1"/>
</dbReference>
<dbReference type="Pfam" id="PF02623">
    <property type="entry name" value="FliW"/>
    <property type="match status" value="1"/>
</dbReference>
<dbReference type="SUPFAM" id="SSF141457">
    <property type="entry name" value="BH3618-like"/>
    <property type="match status" value="1"/>
</dbReference>